<feature type="initiator methionine" description="Removed; by host" evidence="1">
    <location>
        <position position="1"/>
    </location>
</feature>
<feature type="chain" id="PRO_0000261213" description="Gag polyprotein">
    <location>
        <begin position="2"/>
        <end position="500"/>
    </location>
</feature>
<feature type="chain" id="PRO_0000038517" description="Matrix protein p17" evidence="1">
    <location>
        <begin position="2"/>
        <end position="132"/>
    </location>
</feature>
<feature type="chain" id="PRO_0000038518" description="Capsid protein p24" evidence="1">
    <location>
        <begin position="133"/>
        <end position="363"/>
    </location>
</feature>
<feature type="peptide" id="PRO_0000038519" description="Spacer peptide 1" evidence="1">
    <location>
        <begin position="364"/>
        <end position="377"/>
    </location>
</feature>
<feature type="chain" id="PRO_0000038520" description="Nucleocapsid protein p7" evidence="1">
    <location>
        <begin position="378"/>
        <end position="432"/>
    </location>
</feature>
<feature type="peptide" id="PRO_0000038521" description="Spacer peptide 2" evidence="1">
    <location>
        <begin position="433"/>
        <end position="448"/>
    </location>
</feature>
<feature type="chain" id="PRO_0000038522" description="p6-gag" evidence="1">
    <location>
        <begin position="449"/>
        <end position="500"/>
    </location>
</feature>
<feature type="zinc finger region" description="CCHC-type 1" evidence="8">
    <location>
        <begin position="390"/>
        <end position="407"/>
    </location>
</feature>
<feature type="zinc finger region" description="CCHC-type 2" evidence="8">
    <location>
        <begin position="411"/>
        <end position="428"/>
    </location>
</feature>
<feature type="region of interest" description="Interaction with Gp41" evidence="6">
    <location>
        <begin position="7"/>
        <end position="31"/>
    </location>
</feature>
<feature type="region of interest" description="Interaction with host CALM1" evidence="5">
    <location>
        <begin position="8"/>
        <end position="43"/>
    </location>
</feature>
<feature type="region of interest" description="Interaction with host AP3D1" evidence="7">
    <location>
        <begin position="12"/>
        <end position="19"/>
    </location>
</feature>
<feature type="region of interest" description="Interaction with membrane phosphatidylinositol 4,5-bisphosphate and RNA" evidence="6">
    <location>
        <begin position="14"/>
        <end position="33"/>
    </location>
</feature>
<feature type="region of interest" description="Interaction with membrane phosphatidylinositol 4,5-bisphosphate" evidence="6">
    <location>
        <begin position="73"/>
        <end position="77"/>
    </location>
</feature>
<feature type="region of interest" description="Disordered" evidence="9">
    <location>
        <begin position="106"/>
        <end position="128"/>
    </location>
</feature>
<feature type="region of interest" description="Interaction with host PPIA/CYPA and NUP153" evidence="6">
    <location>
        <begin position="189"/>
        <end position="227"/>
    </location>
</feature>
<feature type="region of interest" description="PPIA/CYPA-binding loop" evidence="5">
    <location>
        <begin position="217"/>
        <end position="225"/>
    </location>
</feature>
<feature type="region of interest" description="Dimerization/Multimerization of capsid protein p24" evidence="5">
    <location>
        <begin position="277"/>
        <end position="363"/>
    </location>
</feature>
<feature type="region of interest" description="Disordered" evidence="9">
    <location>
        <begin position="438"/>
        <end position="500"/>
    </location>
</feature>
<feature type="short sequence motif" description="Nuclear export signal" evidence="1">
    <location>
        <begin position="16"/>
        <end position="22"/>
    </location>
</feature>
<feature type="short sequence motif" description="Nuclear localization signal" evidence="1">
    <location>
        <begin position="26"/>
        <end position="32"/>
    </location>
</feature>
<feature type="short sequence motif" description="PTAP/PSAP motif">
    <location>
        <begin position="455"/>
        <end position="458"/>
    </location>
</feature>
<feature type="short sequence motif" description="LYPX(n)L motif">
    <location>
        <begin position="483"/>
        <end position="492"/>
    </location>
</feature>
<feature type="site" description="Cleavage; by viral protease" evidence="1">
    <location>
        <begin position="132"/>
        <end position="133"/>
    </location>
</feature>
<feature type="site" description="Cleavage; by viral protease" evidence="1">
    <location>
        <begin position="363"/>
        <end position="364"/>
    </location>
</feature>
<feature type="site" description="Cleavage; by viral protease" evidence="1">
    <location>
        <begin position="377"/>
        <end position="378"/>
    </location>
</feature>
<feature type="site" description="Cleavage; by viral protease" evidence="1">
    <location>
        <begin position="432"/>
        <end position="433"/>
    </location>
</feature>
<feature type="site" description="Cleavage; by viral protease" evidence="1">
    <location>
        <begin position="448"/>
        <end position="449"/>
    </location>
</feature>
<feature type="modified residue" description="Phosphoserine; by host MAPK1" evidence="6">
    <location>
        <position position="148"/>
    </location>
</feature>
<feature type="modified residue" description="Asymmetric dimethylarginine; in Nucleocapsid protein p7; by host PRMT6" evidence="1">
    <location>
        <position position="409"/>
    </location>
</feature>
<feature type="lipid moiety-binding region" description="N-myristoyl glycine; by host" evidence="1">
    <location>
        <position position="2"/>
    </location>
</feature>
<sequence>MGARASVLSGGELDRWEKIRLRPGGKKQYRLKHIVWASRKLERFAVNPGLLETSKGCRQILGQLQPSLQTGSEELRSLYNTVATLYCVHQRIEVRDTKEALDKIEEEQNKSKKKAQQAAADTGNSSQVSQNYPIVQNLQGQMVHQAISPRTLNAWVKVIEEKAFSPEVIPMFAALSEGATPQDLNTMLNTVGGHQAAMQMLKETINEEAAEWDRLHPVHAGPIAPGQMREPRGSDIAGTTSTLQEQIGWMTNNPPTPVGEIYKRWIILGLNKIVRMYSPISILDIRQGPKEPFRDYVDRFYKTLRAEQASQEVKNWMTETLLVQNANPDCKTILKALGPAATLEEMMTACQGVGGPGHKARVLAEAMSQVTNSATIMMQRGNFRRQGKTVKCFNCGKEGHIARNCKAPRKKGCWKCGREGHQMKDCTERQANFLGKIWPSHKGRPGNFLQSRPEPTAPPEESFRFGDETTTPSQKQEPRDKELYPLASLRSLFGNDPSSQ</sequence>
<dbReference type="EMBL" id="AH002346">
    <property type="protein sequence ID" value="AAA44306.1"/>
    <property type="molecule type" value="Genomic_RNA"/>
</dbReference>
<dbReference type="PIR" id="A25523">
    <property type="entry name" value="FOVWH4"/>
</dbReference>
<dbReference type="SMR" id="P05887"/>
<dbReference type="PRO" id="PR:P05887"/>
<dbReference type="GO" id="GO:0042025">
    <property type="term" value="C:host cell nucleus"/>
    <property type="evidence" value="ECO:0007669"/>
    <property type="project" value="UniProtKB-SubCell"/>
</dbReference>
<dbReference type="GO" id="GO:0020002">
    <property type="term" value="C:host cell plasma membrane"/>
    <property type="evidence" value="ECO:0007669"/>
    <property type="project" value="UniProtKB-SubCell"/>
</dbReference>
<dbReference type="GO" id="GO:0072494">
    <property type="term" value="C:host multivesicular body"/>
    <property type="evidence" value="ECO:0007669"/>
    <property type="project" value="UniProtKB-SubCell"/>
</dbReference>
<dbReference type="GO" id="GO:0016020">
    <property type="term" value="C:membrane"/>
    <property type="evidence" value="ECO:0007669"/>
    <property type="project" value="UniProtKB-KW"/>
</dbReference>
<dbReference type="GO" id="GO:0019013">
    <property type="term" value="C:viral nucleocapsid"/>
    <property type="evidence" value="ECO:0007669"/>
    <property type="project" value="UniProtKB-KW"/>
</dbReference>
<dbReference type="GO" id="GO:0055036">
    <property type="term" value="C:virion membrane"/>
    <property type="evidence" value="ECO:0007669"/>
    <property type="project" value="UniProtKB-SubCell"/>
</dbReference>
<dbReference type="GO" id="GO:0003723">
    <property type="term" value="F:RNA binding"/>
    <property type="evidence" value="ECO:0007669"/>
    <property type="project" value="UniProtKB-KW"/>
</dbReference>
<dbReference type="GO" id="GO:0005198">
    <property type="term" value="F:structural molecule activity"/>
    <property type="evidence" value="ECO:0007669"/>
    <property type="project" value="InterPro"/>
</dbReference>
<dbReference type="GO" id="GO:0008270">
    <property type="term" value="F:zinc ion binding"/>
    <property type="evidence" value="ECO:0007669"/>
    <property type="project" value="UniProtKB-KW"/>
</dbReference>
<dbReference type="GO" id="GO:0039702">
    <property type="term" value="P:viral budding via host ESCRT complex"/>
    <property type="evidence" value="ECO:0007669"/>
    <property type="project" value="UniProtKB-KW"/>
</dbReference>
<dbReference type="GO" id="GO:0075523">
    <property type="term" value="P:viral translational frameshifting"/>
    <property type="evidence" value="ECO:0007669"/>
    <property type="project" value="UniProtKB-KW"/>
</dbReference>
<dbReference type="FunFam" id="1.10.1200.30:FF:000001">
    <property type="entry name" value="Gag polyprotein"/>
    <property type="match status" value="1"/>
</dbReference>
<dbReference type="FunFam" id="1.10.150.90:FF:000001">
    <property type="entry name" value="Gag polyprotein"/>
    <property type="match status" value="1"/>
</dbReference>
<dbReference type="FunFam" id="1.10.375.10:FF:000001">
    <property type="entry name" value="Gag polyprotein"/>
    <property type="match status" value="1"/>
</dbReference>
<dbReference type="FunFam" id="4.10.60.10:FF:000001">
    <property type="entry name" value="Gag polyprotein"/>
    <property type="match status" value="1"/>
</dbReference>
<dbReference type="Gene3D" id="1.10.1200.30">
    <property type="match status" value="1"/>
</dbReference>
<dbReference type="Gene3D" id="6.10.250.390">
    <property type="match status" value="1"/>
</dbReference>
<dbReference type="Gene3D" id="1.10.375.10">
    <property type="entry name" value="Human Immunodeficiency Virus Type 1 Capsid Protein"/>
    <property type="match status" value="1"/>
</dbReference>
<dbReference type="Gene3D" id="1.10.150.90">
    <property type="entry name" value="Immunodeficiency lentiviruses, gag gene matrix protein p17"/>
    <property type="match status" value="1"/>
</dbReference>
<dbReference type="Gene3D" id="1.20.5.760">
    <property type="entry name" value="Single helix bin"/>
    <property type="match status" value="1"/>
</dbReference>
<dbReference type="Gene3D" id="4.10.60.10">
    <property type="entry name" value="Zinc finger, CCHC-type"/>
    <property type="match status" value="1"/>
</dbReference>
<dbReference type="InterPro" id="IPR045345">
    <property type="entry name" value="Gag_p24_C"/>
</dbReference>
<dbReference type="InterPro" id="IPR014817">
    <property type="entry name" value="Gag_p6"/>
</dbReference>
<dbReference type="InterPro" id="IPR000071">
    <property type="entry name" value="Lentvrl_matrix_N"/>
</dbReference>
<dbReference type="InterPro" id="IPR012344">
    <property type="entry name" value="Matrix_HIV/RSV_N"/>
</dbReference>
<dbReference type="InterPro" id="IPR050195">
    <property type="entry name" value="Primate_lentivir_Gag_pol-like"/>
</dbReference>
<dbReference type="InterPro" id="IPR008916">
    <property type="entry name" value="Retrov_capsid_C"/>
</dbReference>
<dbReference type="InterPro" id="IPR008919">
    <property type="entry name" value="Retrov_capsid_N"/>
</dbReference>
<dbReference type="InterPro" id="IPR010999">
    <property type="entry name" value="Retrovr_matrix"/>
</dbReference>
<dbReference type="InterPro" id="IPR001878">
    <property type="entry name" value="Znf_CCHC"/>
</dbReference>
<dbReference type="InterPro" id="IPR036875">
    <property type="entry name" value="Znf_CCHC_sf"/>
</dbReference>
<dbReference type="PANTHER" id="PTHR40389:SF4">
    <property type="match status" value="1"/>
</dbReference>
<dbReference type="PANTHER" id="PTHR40389">
    <property type="entry name" value="ENDOGENOUS RETROVIRUS GROUP K MEMBER 24 GAG POLYPROTEIN-RELATED"/>
    <property type="match status" value="1"/>
</dbReference>
<dbReference type="Pfam" id="PF00540">
    <property type="entry name" value="Gag_p17"/>
    <property type="match status" value="1"/>
</dbReference>
<dbReference type="Pfam" id="PF19317">
    <property type="entry name" value="Gag_p24_C"/>
    <property type="match status" value="1"/>
</dbReference>
<dbReference type="Pfam" id="PF08705">
    <property type="entry name" value="Gag_p6"/>
    <property type="match status" value="1"/>
</dbReference>
<dbReference type="Pfam" id="PF00098">
    <property type="entry name" value="zf-CCHC"/>
    <property type="match status" value="2"/>
</dbReference>
<dbReference type="PRINTS" id="PR00234">
    <property type="entry name" value="HIV1MATRIX"/>
</dbReference>
<dbReference type="SMART" id="SM00343">
    <property type="entry name" value="ZnF_C2HC"/>
    <property type="match status" value="2"/>
</dbReference>
<dbReference type="SUPFAM" id="SSF47836">
    <property type="entry name" value="Retroviral matrix proteins"/>
    <property type="match status" value="1"/>
</dbReference>
<dbReference type="SUPFAM" id="SSF47353">
    <property type="entry name" value="Retrovirus capsid dimerization domain-like"/>
    <property type="match status" value="1"/>
</dbReference>
<dbReference type="SUPFAM" id="SSF47943">
    <property type="entry name" value="Retrovirus capsid protein, N-terminal core domain"/>
    <property type="match status" value="1"/>
</dbReference>
<dbReference type="SUPFAM" id="SSF57756">
    <property type="entry name" value="Retrovirus zinc finger-like domains"/>
    <property type="match status" value="1"/>
</dbReference>
<dbReference type="PROSITE" id="PS50158">
    <property type="entry name" value="ZF_CCHC"/>
    <property type="match status" value="2"/>
</dbReference>
<comment type="function">
    <molecule>Gag polyprotein</molecule>
    <text evidence="5">Mediates, with Gag-Pol polyprotein, the essential events in virion assembly, including binding the plasma membrane, making the protein-protein interactions necessary to create spherical particles, recruiting the viral Env proteins, and packaging the genomic RNA via direct interactions with the RNA packaging sequence (Psi).</text>
</comment>
<comment type="function">
    <molecule>Matrix protein p17</molecule>
    <text evidence="1 6">Targets the polyprotein to the plasma membrane via a multipartite membrane-binding signal, that includes its myristoylated N-terminus (By similarity). Matrix protein is part of the pre-integration complex. Implicated in the release from host cell mediated by Vpu. Binds to RNA (By similarity).</text>
</comment>
<comment type="function">
    <molecule>Capsid protein p24</molecule>
    <text evidence="5 6">Forms the conical core that encapsulates the genomic RNA-nucleocapsid complex in the virion. Most core are conical, with only 7% tubular. The core is constituted by capsid protein hexamer subunits. The core is disassembled soon after virion entry (By similarity). The capsid promotes immune invasion by cloaking viral DNA from CGAS detection (By similarity). Host restriction factors such as TRIM5-alpha or TRIMCyp bind retroviral capsids and cause premature capsid disassembly, leading to blocks in reverse transcription. Capsid restriction by TRIM5 is one of the factors which restricts HIV-1 to the human species. Host PIN1 apparently facilitates the virion uncoating (By similarity). On the other hand, interactions with PDZD8 or CYPA stabilize the capsid (By similarity).</text>
</comment>
<comment type="function">
    <molecule>Nucleocapsid protein p7</molecule>
    <text evidence="5">Encapsulates and protects viral dimeric unspliced genomic RNA (gRNA). Binds these RNAs through its zinc fingers. Acts as a nucleic acid chaperone which is involved in rearangement of nucleic acid secondary structure during gRNA retrotranscription. Also facilitates template switch leading to recombination. As part of the polyprotein, participates in gRNA dimerization, packaging, tRNA incorporation and virion assembly.</text>
</comment>
<comment type="function">
    <molecule>p6-gag</molecule>
    <text evidence="6">Plays a role in budding of the assembled particle by interacting with the host class E VPS proteins TSG101 and PDCD6IP/AIP1.</text>
</comment>
<comment type="subunit">
    <molecule>Gag polyprotein</molecule>
    <text evidence="4 5">Homotrimer; further assembles as hexamers of trimers. Oligomerization possibly creates a central hole into which the cytoplasmic tail of the gp41 envelope protein may be inserted. Interacts with host TRIM22; this interaction seems to disrupt proper trafficking of Gag polyprotein and may interfere with budding. Interacts with host PDZD8. When ubiquitinated, interacts (via p6-gag domain) with host PACSIN2; this interaction allows PACSIN2 recruitment to viral assembly sites and its subsequent incorporation into virions. Interacts with MOV10 (By similarity).</text>
</comment>
<comment type="subunit">
    <molecule>Matrix protein p17</molecule>
    <text evidence="5 6">Homotrimer; further assembles as hexamers of trimers. Interacts with gp41 (via C-terminus). Interacts with host CALM1; this interaction induces a conformational change in the Matrix protein, triggering exposure of the myristate group. Interacts with host AP3D1; this interaction allows the polyprotein trafficking to multivesicular bodies during virus assembly. Part of the pre-integration complex (PIC) which is composed of viral genome, matrix protein, Vpr and integrase.</text>
</comment>
<comment type="subunit">
    <molecule>Capsid protein p24</molecule>
    <text evidence="5 6">Homodimer; the homodimer further multimerizes as homohexamers or homopentamers (By similarity). Interacts with host NUP98 (By similarity). Interacts with host PPIA/CYPA; this interaction stabilizes the capsid (By similarity). Interacts with host NUP153 (By similarity). Interacts with host PDZD8; this interaction stabilizes the capsid. Interacts with host TRIM5; this interaction destabilizes the capsid (By similarity). Interacts with host CPSF6 (By similarity). Interacts with host NONO; the interaction is weak (By similarity).</text>
</comment>
<comment type="subunit">
    <molecule>Nucleocapsid protein p7</molecule>
    <text evidence="6">Interacts with host NUP98.</text>
</comment>
<comment type="subunit">
    <molecule>p6-gag</molecule>
    <text evidence="3 6">Interacts with Vpr; this interaction allows Vpr incorporation into the virion. Interacts with host TSG101. p6-gag interacts with host PDCD6IP/AIP1.</text>
</comment>
<comment type="subcellular location">
    <molecule>Gag polyprotein</molecule>
    <subcellularLocation>
        <location evidence="6">Host cell membrane</location>
        <topology evidence="6">Lipid-anchor</topology>
    </subcellularLocation>
    <subcellularLocation>
        <location evidence="6">Host endosome</location>
        <location evidence="6">Host multivesicular body</location>
    </subcellularLocation>
    <text evidence="6">These locations are probably linked to virus assembly sites. The main location is the cell membrane, but under some circumstances, late endosomal compartments can serve as productive sites for virion assembly.</text>
</comment>
<comment type="subcellular location">
    <molecule>Matrix protein p17</molecule>
    <subcellularLocation>
        <location evidence="6">Virion membrane</location>
        <topology evidence="6">Lipid-anchor</topology>
    </subcellularLocation>
    <subcellularLocation>
        <location evidence="1">Host nucleus</location>
    </subcellularLocation>
    <subcellularLocation>
        <location evidence="1">Host cytoplasm</location>
    </subcellularLocation>
</comment>
<comment type="subcellular location">
    <molecule>Capsid protein p24</molecule>
    <subcellularLocation>
        <location evidence="6">Virion</location>
    </subcellularLocation>
</comment>
<comment type="subcellular location">
    <molecule>Nucleocapsid protein p7</molecule>
    <subcellularLocation>
        <location evidence="6">Virion</location>
    </subcellularLocation>
</comment>
<comment type="alternative products">
    <event type="ribosomal frameshifting"/>
    <isoform>
        <id>P05887-1</id>
        <name>Gag polyprotein</name>
        <sequence type="displayed"/>
    </isoform>
    <isoform>
        <id>P05960-1</id>
        <name>Gag-Pol polyprotein</name>
        <sequence type="external"/>
    </isoform>
    <text>Translation results in the formation of the Gag polyprotein most of the time. Ribosomal frameshifting at the gag-pol genes boundary occurs at low frequency and produces the Gag-Pol polyprotein. This strategy of translation probably allows the virus to modulate the quantity of each viral protein. Maintenance of a correct Gag to Gag-Pol ratio is essential for RNA dimerization and viral infectivity.</text>
</comment>
<comment type="domain">
    <text evidence="6">Late-budding domains (L domains) are short sequence motifs essential for viral particle budding. They recruit proteins of the host ESCRT machinery (Endosomal Sorting Complex Required for Transport) or ESCRT-associated proteins. p6-gag contains two L domains: a PTAP/PSAP motif, which interacts with the UEV domain of TSG101 and a LYPX(n)L motif which interacts with PDCD6IP/AIP1.</text>
</comment>
<comment type="PTM">
    <text evidence="6">Gag-Pol polyprotein: Specific enzymatic cleavages by the viral protease yield mature proteins.</text>
</comment>
<comment type="PTM">
    <molecule>Matrix protein p17</molecule>
    <text evidence="5">Tyrosine phosphorylated presumably in the virion by a host kinase. Phosphorylation is apparently not a major regulator of membrane association.</text>
</comment>
<comment type="PTM">
    <text evidence="6">Capsid protein p24 is phosphorylated possibly by host MAPK1; this phosphorylation is necessary for Pin1-mediated virion uncoating.</text>
</comment>
<comment type="PTM">
    <text evidence="2">Nucleocapsid protein p7 is methylated by host PRMT6, impairing its function by reducing RNA annealing and the initiation of reverse transcription.</text>
</comment>
<comment type="miscellaneous">
    <text>HIV-1 lineages are divided in three main groups, M (for Major), O (for Outlier), and N (for New, or Non-M, Non-O). The vast majority of strains found worldwide belong to the group M. Group O seems to be endemic to and largely confined to Cameroon and neighboring countries in West Central Africa, where these viruses represent a small minority of HIV-1 strains. The group N is represented by a limited number of isolates from Cameroonian persons. The group M is further subdivided in 9 clades or subtypes (A to D, F to H, J and K).</text>
</comment>
<comment type="miscellaneous">
    <molecule>Isoform Gag polyprotein</molecule>
    <text>Produced by conventional translation.</text>
</comment>
<comment type="similarity">
    <text evidence="10">Belongs to the primate lentivirus group gag polyprotein family.</text>
</comment>
<gene>
    <name type="primary">gag</name>
</gene>
<protein>
    <recommendedName>
        <fullName>Gag polyprotein</fullName>
    </recommendedName>
    <alternativeName>
        <fullName>Pr55Gag</fullName>
    </alternativeName>
    <component>
        <recommendedName>
            <fullName>Matrix protein p17</fullName>
            <shortName>MA</shortName>
        </recommendedName>
    </component>
    <component>
        <recommendedName>
            <fullName>Capsid protein p24</fullName>
            <shortName>CA</shortName>
        </recommendedName>
    </component>
    <component>
        <recommendedName>
            <fullName evidence="6">Spacer peptide 1</fullName>
            <shortName>SP1</shortName>
        </recommendedName>
        <alternativeName>
            <fullName>p2</fullName>
        </alternativeName>
    </component>
    <component>
        <recommendedName>
            <fullName>Nucleocapsid protein p7</fullName>
            <shortName>NC</shortName>
        </recommendedName>
    </component>
    <component>
        <recommendedName>
            <fullName evidence="6">Spacer peptide 2</fullName>
            <shortName>SP2</shortName>
        </recommendedName>
        <alternativeName>
            <fullName>p1</fullName>
        </alternativeName>
    </component>
    <component>
        <recommendedName>
            <fullName>p6-gag</fullName>
        </recommendedName>
    </component>
</protein>
<keyword id="KW-0014">AIDS</keyword>
<keyword id="KW-0167">Capsid protein</keyword>
<keyword id="KW-1032">Host cell membrane</keyword>
<keyword id="KW-1035">Host cytoplasm</keyword>
<keyword id="KW-1039">Host endosome</keyword>
<keyword id="KW-1043">Host membrane</keyword>
<keyword id="KW-1048">Host nucleus</keyword>
<keyword id="KW-0945">Host-virus interaction</keyword>
<keyword id="KW-0449">Lipoprotein</keyword>
<keyword id="KW-0472">Membrane</keyword>
<keyword id="KW-0479">Metal-binding</keyword>
<keyword id="KW-0488">Methylation</keyword>
<keyword id="KW-0519">Myristate</keyword>
<keyword id="KW-0597">Phosphoprotein</keyword>
<keyword id="KW-0677">Repeat</keyword>
<keyword id="KW-0688">Ribosomal frameshifting</keyword>
<keyword id="KW-0694">RNA-binding</keyword>
<keyword id="KW-1198">Viral budding</keyword>
<keyword id="KW-1187">Viral budding via the host ESCRT complexes</keyword>
<keyword id="KW-0543">Viral nucleoprotein</keyword>
<keyword id="KW-1188">Viral release from host cell</keyword>
<keyword id="KW-0946">Virion</keyword>
<keyword id="KW-0862">Zinc</keyword>
<keyword id="KW-0863">Zinc-finger</keyword>
<accession>P05887</accession>
<organismHost>
    <name type="scientific">Homo sapiens</name>
    <name type="common">Human</name>
    <dbReference type="NCBI Taxonomy" id="9606"/>
</organismHost>
<name>GAG_HV1C4</name>
<proteinExistence type="inferred from homology"/>
<reference key="1">
    <citation type="journal article" date="1986" name="Proc. Natl. Acad. Sci. U.S.A.">
        <title>Molecular cloning and primary nucleotide sequence analysis of a distinct human immunodeficiency virus isolate reveal significant divergence in its genomic sequences.</title>
        <authorList>
            <person name="Desai S.M."/>
            <person name="Kalyanaraman V.S."/>
            <person name="Casey J.M."/>
            <person name="Srinivasan A."/>
            <person name="Andersen P.R."/>
            <person name="Devare S.G."/>
        </authorList>
    </citation>
    <scope>NUCLEOTIDE SEQUENCE [GENOMIC RNA]</scope>
</reference>
<reference key="2">
    <citation type="journal article" date="2003" name="Biochim. Biophys. Acta">
        <title>Role of HIV-1 Gag domains in viral assembly.</title>
        <authorList>
            <person name="Scarlata S."/>
            <person name="Carter C."/>
        </authorList>
    </citation>
    <scope>REVIEW</scope>
</reference>
<evidence type="ECO:0000250" key="1"/>
<evidence type="ECO:0000250" key="2">
    <source>
        <dbReference type="UniProtKB" id="P03347"/>
    </source>
</evidence>
<evidence type="ECO:0000250" key="3">
    <source>
        <dbReference type="UniProtKB" id="P03348"/>
    </source>
</evidence>
<evidence type="ECO:0000250" key="4">
    <source>
        <dbReference type="UniProtKB" id="P03349"/>
    </source>
</evidence>
<evidence type="ECO:0000250" key="5">
    <source>
        <dbReference type="UniProtKB" id="P04591"/>
    </source>
</evidence>
<evidence type="ECO:0000250" key="6">
    <source>
        <dbReference type="UniProtKB" id="P12493"/>
    </source>
</evidence>
<evidence type="ECO:0000250" key="7">
    <source>
        <dbReference type="UniProtKB" id="P12497"/>
    </source>
</evidence>
<evidence type="ECO:0000255" key="8">
    <source>
        <dbReference type="PROSITE-ProRule" id="PRU00047"/>
    </source>
</evidence>
<evidence type="ECO:0000256" key="9">
    <source>
        <dbReference type="SAM" id="MobiDB-lite"/>
    </source>
</evidence>
<evidence type="ECO:0000305" key="10"/>
<organism>
    <name type="scientific">Human immunodeficiency virus type 1 group M subtype B (isolate CDC-451)</name>
    <name type="common">HIV-1</name>
    <dbReference type="NCBI Taxonomy" id="11687"/>
    <lineage>
        <taxon>Viruses</taxon>
        <taxon>Riboviria</taxon>
        <taxon>Pararnavirae</taxon>
        <taxon>Artverviricota</taxon>
        <taxon>Revtraviricetes</taxon>
        <taxon>Ortervirales</taxon>
        <taxon>Retroviridae</taxon>
        <taxon>Orthoretrovirinae</taxon>
        <taxon>Lentivirus</taxon>
        <taxon>Human immunodeficiency virus type 1</taxon>
    </lineage>
</organism>